<name>SECD_TREPA</name>
<evidence type="ECO:0000255" key="1">
    <source>
        <dbReference type="HAMAP-Rule" id="MF_01463"/>
    </source>
</evidence>
<gene>
    <name evidence="1" type="primary">secD</name>
    <name type="ordered locus">TP_0410</name>
</gene>
<dbReference type="EMBL" id="AE000520">
    <property type="protein sequence ID" value="AAC65398.1"/>
    <property type="molecule type" value="Genomic_DNA"/>
</dbReference>
<dbReference type="PIR" id="H71326">
    <property type="entry name" value="H71326"/>
</dbReference>
<dbReference type="RefSeq" id="WP_010881858.1">
    <property type="nucleotide sequence ID" value="NC_021490.2"/>
</dbReference>
<dbReference type="SMR" id="O83425"/>
<dbReference type="IntAct" id="O83425">
    <property type="interactions" value="9"/>
</dbReference>
<dbReference type="STRING" id="243276.TP_0410"/>
<dbReference type="EnsemblBacteria" id="AAC65398">
    <property type="protein sequence ID" value="AAC65398"/>
    <property type="gene ID" value="TP_0410"/>
</dbReference>
<dbReference type="GeneID" id="93876184"/>
<dbReference type="KEGG" id="tpa:TP_0410"/>
<dbReference type="KEGG" id="tpw:TPANIC_0410"/>
<dbReference type="eggNOG" id="COG0342">
    <property type="taxonomic scope" value="Bacteria"/>
</dbReference>
<dbReference type="HOGENOM" id="CLU_007894_4_3_12"/>
<dbReference type="OrthoDB" id="9805019at2"/>
<dbReference type="Proteomes" id="UP000000811">
    <property type="component" value="Chromosome"/>
</dbReference>
<dbReference type="GO" id="GO:0005886">
    <property type="term" value="C:plasma membrane"/>
    <property type="evidence" value="ECO:0007669"/>
    <property type="project" value="UniProtKB-SubCell"/>
</dbReference>
<dbReference type="GO" id="GO:0015450">
    <property type="term" value="F:protein-transporting ATPase activity"/>
    <property type="evidence" value="ECO:0007669"/>
    <property type="project" value="InterPro"/>
</dbReference>
<dbReference type="GO" id="GO:0065002">
    <property type="term" value="P:intracellular protein transmembrane transport"/>
    <property type="evidence" value="ECO:0007669"/>
    <property type="project" value="UniProtKB-UniRule"/>
</dbReference>
<dbReference type="GO" id="GO:0006605">
    <property type="term" value="P:protein targeting"/>
    <property type="evidence" value="ECO:0007669"/>
    <property type="project" value="UniProtKB-UniRule"/>
</dbReference>
<dbReference type="GO" id="GO:0043952">
    <property type="term" value="P:protein transport by the Sec complex"/>
    <property type="evidence" value="ECO:0007669"/>
    <property type="project" value="UniProtKB-UniRule"/>
</dbReference>
<dbReference type="Gene3D" id="3.30.1360.200">
    <property type="match status" value="1"/>
</dbReference>
<dbReference type="Gene3D" id="3.30.70.3220">
    <property type="match status" value="1"/>
</dbReference>
<dbReference type="Gene3D" id="1.20.1640.10">
    <property type="entry name" value="Multidrug efflux transporter AcrB transmembrane domain"/>
    <property type="match status" value="1"/>
</dbReference>
<dbReference type="HAMAP" id="MF_01463_B">
    <property type="entry name" value="SecD_B"/>
    <property type="match status" value="1"/>
</dbReference>
<dbReference type="InterPro" id="IPR005791">
    <property type="entry name" value="SecD"/>
</dbReference>
<dbReference type="InterPro" id="IPR022813">
    <property type="entry name" value="SecD/SecF_arch_bac"/>
</dbReference>
<dbReference type="InterPro" id="IPR048631">
    <property type="entry name" value="SecD_1st"/>
</dbReference>
<dbReference type="InterPro" id="IPR048634">
    <property type="entry name" value="SecD_SecF_C"/>
</dbReference>
<dbReference type="InterPro" id="IPR055344">
    <property type="entry name" value="SecD_SecF_C_bact"/>
</dbReference>
<dbReference type="InterPro" id="IPR054384">
    <property type="entry name" value="SecDF_P1_head"/>
</dbReference>
<dbReference type="NCBIfam" id="TIGR00916">
    <property type="entry name" value="2A0604s01"/>
    <property type="match status" value="1"/>
</dbReference>
<dbReference type="NCBIfam" id="TIGR01129">
    <property type="entry name" value="secD"/>
    <property type="match status" value="1"/>
</dbReference>
<dbReference type="PANTHER" id="PTHR30081:SF1">
    <property type="entry name" value="PROTEIN TRANSLOCASE SUBUNIT SECD"/>
    <property type="match status" value="1"/>
</dbReference>
<dbReference type="PANTHER" id="PTHR30081">
    <property type="entry name" value="PROTEIN-EXPORT MEMBRANE PROTEIN SEC"/>
    <property type="match status" value="1"/>
</dbReference>
<dbReference type="Pfam" id="PF21760">
    <property type="entry name" value="SecD_1st"/>
    <property type="match status" value="1"/>
</dbReference>
<dbReference type="Pfam" id="PF02355">
    <property type="entry name" value="SecD_SecF_C"/>
    <property type="match status" value="1"/>
</dbReference>
<dbReference type="Pfam" id="PF22599">
    <property type="entry name" value="SecDF_P1_head"/>
    <property type="match status" value="1"/>
</dbReference>
<dbReference type="SUPFAM" id="SSF82866">
    <property type="entry name" value="Multidrug efflux transporter AcrB transmembrane domain"/>
    <property type="match status" value="1"/>
</dbReference>
<feature type="chain" id="PRO_0000095973" description="Protein translocase subunit SecD">
    <location>
        <begin position="1"/>
        <end position="583"/>
    </location>
</feature>
<feature type="transmembrane region" description="Helical" evidence="1">
    <location>
        <begin position="7"/>
        <end position="27"/>
    </location>
</feature>
<feature type="transmembrane region" description="Helical" evidence="1">
    <location>
        <begin position="419"/>
        <end position="439"/>
    </location>
</feature>
<feature type="transmembrane region" description="Helical" evidence="1">
    <location>
        <begin position="446"/>
        <end position="468"/>
    </location>
</feature>
<feature type="transmembrane region" description="Helical" evidence="1">
    <location>
        <begin position="469"/>
        <end position="489"/>
    </location>
</feature>
<feature type="transmembrane region" description="Helical" evidence="1">
    <location>
        <begin position="511"/>
        <end position="531"/>
    </location>
</feature>
<feature type="transmembrane region" description="Helical" evidence="1">
    <location>
        <begin position="538"/>
        <end position="558"/>
    </location>
</feature>
<organism>
    <name type="scientific">Treponema pallidum (strain Nichols)</name>
    <dbReference type="NCBI Taxonomy" id="243276"/>
    <lineage>
        <taxon>Bacteria</taxon>
        <taxon>Pseudomonadati</taxon>
        <taxon>Spirochaetota</taxon>
        <taxon>Spirochaetia</taxon>
        <taxon>Spirochaetales</taxon>
        <taxon>Treponemataceae</taxon>
        <taxon>Treponema</taxon>
    </lineage>
</organism>
<reference key="1">
    <citation type="journal article" date="1998" name="Science">
        <title>Complete genome sequence of Treponema pallidum, the syphilis spirochete.</title>
        <authorList>
            <person name="Fraser C.M."/>
            <person name="Norris S.J."/>
            <person name="Weinstock G.M."/>
            <person name="White O."/>
            <person name="Sutton G.G."/>
            <person name="Dodson R.J."/>
            <person name="Gwinn M.L."/>
            <person name="Hickey E.K."/>
            <person name="Clayton R.A."/>
            <person name="Ketchum K.A."/>
            <person name="Sodergren E."/>
            <person name="Hardham J.M."/>
            <person name="McLeod M.P."/>
            <person name="Salzberg S.L."/>
            <person name="Peterson J.D."/>
            <person name="Khalak H.G."/>
            <person name="Richardson D.L."/>
            <person name="Howell J.K."/>
            <person name="Chidambaram M."/>
            <person name="Utterback T.R."/>
            <person name="McDonald L.A."/>
            <person name="Artiach P."/>
            <person name="Bowman C."/>
            <person name="Cotton M.D."/>
            <person name="Fujii C."/>
            <person name="Garland S.A."/>
            <person name="Hatch B."/>
            <person name="Horst K."/>
            <person name="Roberts K.M."/>
            <person name="Sandusky M."/>
            <person name="Weidman J.F."/>
            <person name="Smith H.O."/>
            <person name="Venter J.C."/>
        </authorList>
    </citation>
    <scope>NUCLEOTIDE SEQUENCE [LARGE SCALE GENOMIC DNA]</scope>
    <source>
        <strain>Nichols</strain>
    </source>
</reference>
<comment type="function">
    <text evidence="1">Part of the Sec protein translocase complex. Interacts with the SecYEG preprotein conducting channel. SecDF uses the proton motive force (PMF) to complete protein translocation after the ATP-dependent function of SecA.</text>
</comment>
<comment type="subunit">
    <text evidence="1">Forms a complex with SecF. Part of the essential Sec protein translocation apparatus which comprises SecA, SecYEG and auxiliary proteins SecDF. Other proteins may also be involved.</text>
</comment>
<comment type="subcellular location">
    <subcellularLocation>
        <location evidence="1">Cell inner membrane</location>
        <topology evidence="1">Multi-pass membrane protein</topology>
    </subcellularLocation>
</comment>
<comment type="similarity">
    <text evidence="1">Belongs to the SecD/SecF family. SecD subfamily.</text>
</comment>
<protein>
    <recommendedName>
        <fullName evidence="1">Protein translocase subunit SecD</fullName>
    </recommendedName>
</protein>
<sequence length="583" mass="63861">MSKKARFGVVLVVLAACSGFLFPTLQWYFLTDAQTRQRALSSREQIKEYAVQSAERDLADLTRLARAGSDEDISARYAPLVAAARQNLSYSGRPAPSRWTAAALVSAFPVKSEQGFVLYARPLMEQTYREAVLKMKRRQAQAVKLGLDLSGGTSVVIKADLSEVTKGVPDAERAAIRSEAMALVLSTLENRINRFGLSEPVIRRQGEDRVYVEIPGLTDRDRVHSIVMGRGVLAFHLVDDDATQKLLDHYRNNPQGTFDAAHQLHDLSLVPEHTSVLGVYRKDSYGLDVRDGFLVVKKEPALEGRHIRDATVSSGRANEPLVLFDLDHEGARIFSELTTKEIGRRLAIVSDGKIRSAPAIREPITAGSGSISGFSAEEAQNLKTALRSAWLNVALEIENQQVVGASMGEESIRQGTRALVWGLCAVLLFMLVWYQEAGVNACVAQLLNLYIMFGVLSAFNLTLTLSSIAGMILTIGMAVDANVVVFERIREELALGKSRGAAVCSGFERAFWAIMDSNVTTFIAALFLSVLGTGPIKGFAYSLAIGVVSSVFTALFVSRLMFDYGTEVLHKKTVRIGWRIARV</sequence>
<keyword id="KW-0997">Cell inner membrane</keyword>
<keyword id="KW-1003">Cell membrane</keyword>
<keyword id="KW-0472">Membrane</keyword>
<keyword id="KW-0653">Protein transport</keyword>
<keyword id="KW-1185">Reference proteome</keyword>
<keyword id="KW-0811">Translocation</keyword>
<keyword id="KW-0812">Transmembrane</keyword>
<keyword id="KW-1133">Transmembrane helix</keyword>
<keyword id="KW-0813">Transport</keyword>
<accession>O83425</accession>
<proteinExistence type="inferred from homology"/>